<keyword id="KW-1185">Reference proteome</keyword>
<keyword id="KW-0964">Secreted</keyword>
<keyword id="KW-0732">Signal</keyword>
<sequence length="326" mass="36252">MEKNRRKKDDAGVMTKTLAGVAALTFLVSFICSSYDITFSHVISTIDVILEESEYYRSTKEWMASSIDATWHEVSIPSRKAEHLQAINPEVDVAAGGKHVFTPEQLHFFDGSRDSKPCYLAILGRVYDVDGKKEYYGPGKSYHHFAGRDATRAFTTGDFTENGLVASTHGLSHDELLSIRDWVSFYDKEYPLVGVVADLYYDSDGQPTAELTDVLARVEKANEYRKAQAVEIEVFPPCNSEYNQNGGRVWCSTKSGGVERQWAGVPRKLIEQTTKKFRCACVKNFGPGVSGAEEVKTSSNRGDLDHPDLELFPDCSPTSNSCKIVS</sequence>
<accession>Q60YT6</accession>
<accession>A8XT08</accession>
<reference key="1">
    <citation type="journal article" date="2003" name="PLoS Biol.">
        <title>The genome sequence of Caenorhabditis briggsae: a platform for comparative genomics.</title>
        <authorList>
            <person name="Stein L.D."/>
            <person name="Bao Z."/>
            <person name="Blasiar D."/>
            <person name="Blumenthal T."/>
            <person name="Brent M.R."/>
            <person name="Chen N."/>
            <person name="Chinwalla A."/>
            <person name="Clarke L."/>
            <person name="Clee C."/>
            <person name="Coghlan A."/>
            <person name="Coulson A."/>
            <person name="D'Eustachio P."/>
            <person name="Fitch D.H.A."/>
            <person name="Fulton L.A."/>
            <person name="Fulton R.E."/>
            <person name="Griffiths-Jones S."/>
            <person name="Harris T.W."/>
            <person name="Hillier L.W."/>
            <person name="Kamath R."/>
            <person name="Kuwabara P.E."/>
            <person name="Mardis E.R."/>
            <person name="Marra M.A."/>
            <person name="Miner T.L."/>
            <person name="Minx P."/>
            <person name="Mullikin J.C."/>
            <person name="Plumb R.W."/>
            <person name="Rogers J."/>
            <person name="Schein J.E."/>
            <person name="Sohrmann M."/>
            <person name="Spieth J."/>
            <person name="Stajich J.E."/>
            <person name="Wei C."/>
            <person name="Willey D."/>
            <person name="Wilson R.K."/>
            <person name="Durbin R.M."/>
            <person name="Waterston R.H."/>
        </authorList>
    </citation>
    <scope>NUCLEOTIDE SEQUENCE [LARGE SCALE GENOMIC DNA]</scope>
    <source>
        <strain>AF16</strain>
    </source>
</reference>
<proteinExistence type="inferred from homology"/>
<dbReference type="EMBL" id="HE600963">
    <property type="protein sequence ID" value="CAP35611.1"/>
    <property type="molecule type" value="Genomic_DNA"/>
</dbReference>
<dbReference type="SMR" id="Q60YT6"/>
<dbReference type="FunCoup" id="Q60YT6">
    <property type="interactions" value="2346"/>
</dbReference>
<dbReference type="STRING" id="6238.Q60YT6"/>
<dbReference type="EnsemblMetazoa" id="CBG18095.1">
    <property type="protein sequence ID" value="CBG18095.1"/>
    <property type="gene ID" value="WBGene00037581"/>
</dbReference>
<dbReference type="KEGG" id="cbr:CBG_18095"/>
<dbReference type="CTD" id="8584138"/>
<dbReference type="WormBase" id="CBG18095">
    <property type="protein sequence ID" value="CBP04346"/>
    <property type="gene ID" value="WBGene00037581"/>
</dbReference>
<dbReference type="eggNOG" id="KOG1108">
    <property type="taxonomic scope" value="Eukaryota"/>
</dbReference>
<dbReference type="HOGENOM" id="CLU_065455_0_0_1"/>
<dbReference type="InParanoid" id="Q60YT6"/>
<dbReference type="OMA" id="GHKHYGP"/>
<dbReference type="Proteomes" id="UP000008549">
    <property type="component" value="Unassembled WGS sequence"/>
</dbReference>
<dbReference type="GO" id="GO:0012505">
    <property type="term" value="C:endomembrane system"/>
    <property type="evidence" value="ECO:0000318"/>
    <property type="project" value="GO_Central"/>
</dbReference>
<dbReference type="GO" id="GO:0005576">
    <property type="term" value="C:extracellular region"/>
    <property type="evidence" value="ECO:0007669"/>
    <property type="project" value="UniProtKB-SubCell"/>
</dbReference>
<dbReference type="GO" id="GO:0016020">
    <property type="term" value="C:membrane"/>
    <property type="evidence" value="ECO:0000318"/>
    <property type="project" value="GO_Central"/>
</dbReference>
<dbReference type="Gene3D" id="3.10.120.10">
    <property type="entry name" value="Cytochrome b5-like heme/steroid binding domain"/>
    <property type="match status" value="1"/>
</dbReference>
<dbReference type="InterPro" id="IPR001199">
    <property type="entry name" value="Cyt_B5-like_heme/steroid-bd"/>
</dbReference>
<dbReference type="InterPro" id="IPR036400">
    <property type="entry name" value="Cyt_B5-like_heme/steroid_sf"/>
</dbReference>
<dbReference type="InterPro" id="IPR050577">
    <property type="entry name" value="MAPR/NEUFC/NENF-like"/>
</dbReference>
<dbReference type="PANTHER" id="PTHR10281">
    <property type="entry name" value="MEMBRANE-ASSOCIATED PROGESTERONE RECEPTOR COMPONENT-RELATED"/>
    <property type="match status" value="1"/>
</dbReference>
<dbReference type="PANTHER" id="PTHR10281:SF4">
    <property type="entry name" value="NEUFERRICIN"/>
    <property type="match status" value="1"/>
</dbReference>
<dbReference type="Pfam" id="PF00173">
    <property type="entry name" value="Cyt-b5"/>
    <property type="match status" value="1"/>
</dbReference>
<dbReference type="SMART" id="SM01117">
    <property type="entry name" value="Cyt-b5"/>
    <property type="match status" value="1"/>
</dbReference>
<dbReference type="SUPFAM" id="SSF55856">
    <property type="entry name" value="Cytochrome b5-like heme/steroid binding domain"/>
    <property type="match status" value="1"/>
</dbReference>
<feature type="signal peptide" evidence="2">
    <location>
        <begin position="1"/>
        <end position="34"/>
    </location>
</feature>
<feature type="chain" id="PRO_0000312326" description="Neuferricin homolog">
    <location>
        <begin position="35"/>
        <end position="326"/>
    </location>
</feature>
<feature type="domain" description="Cytochrome b5 heme-binding">
    <location>
        <begin position="98"/>
        <end position="197"/>
    </location>
</feature>
<protein>
    <recommendedName>
        <fullName>Neuferricin homolog</fullName>
    </recommendedName>
    <alternativeName>
        <fullName>Cytochrome b5 domain-containing protein 2 homolog</fullName>
    </alternativeName>
</protein>
<gene>
    <name type="ORF">CBG18095</name>
</gene>
<organism>
    <name type="scientific">Caenorhabditis briggsae</name>
    <dbReference type="NCBI Taxonomy" id="6238"/>
    <lineage>
        <taxon>Eukaryota</taxon>
        <taxon>Metazoa</taxon>
        <taxon>Ecdysozoa</taxon>
        <taxon>Nematoda</taxon>
        <taxon>Chromadorea</taxon>
        <taxon>Rhabditida</taxon>
        <taxon>Rhabditina</taxon>
        <taxon>Rhabditomorpha</taxon>
        <taxon>Rhabditoidea</taxon>
        <taxon>Rhabditidae</taxon>
        <taxon>Peloderinae</taxon>
        <taxon>Caenorhabditis</taxon>
    </lineage>
</organism>
<comment type="function">
    <text evidence="1">Heme-binding protein.</text>
</comment>
<comment type="subcellular location">
    <subcellularLocation>
        <location evidence="1">Secreted</location>
    </subcellularLocation>
</comment>
<comment type="domain">
    <text evidence="1">The cytochrome b5 heme-binding domain was proven to bind heme, although it lacks the conserved iron-binding His residues at position 136 and 169.</text>
</comment>
<comment type="similarity">
    <text evidence="3">Belongs to the cytochrome b5 family. MAPR subfamily.</text>
</comment>
<name>NEUFC_CAEBR</name>
<evidence type="ECO:0000250" key="1"/>
<evidence type="ECO:0000255" key="2"/>
<evidence type="ECO:0000305" key="3"/>